<feature type="initiator methionine" description="Removed" evidence="4 5">
    <location>
        <position position="1"/>
    </location>
</feature>
<feature type="chain" id="PRO_0000130027" description="Small ribosomal subunit protein uS19">
    <location>
        <begin position="2"/>
        <end position="145"/>
    </location>
</feature>
<feature type="modified residue" description="N-acetylalanine" evidence="4 5">
    <location>
        <position position="2"/>
    </location>
</feature>
<feature type="cross-link" description="Glycyl lysine isopeptide (Lys-Gly) (interchain with G-Cter in SUMO2)" evidence="6">
    <location>
        <position position="108"/>
    </location>
</feature>
<feature type="strand" evidence="9">
    <location>
        <begin position="16"/>
        <end position="19"/>
    </location>
</feature>
<feature type="helix" evidence="9">
    <location>
        <begin position="22"/>
        <end position="27"/>
    </location>
</feature>
<feature type="helix" evidence="9">
    <location>
        <begin position="30"/>
        <end position="36"/>
    </location>
</feature>
<feature type="helix" evidence="9">
    <location>
        <begin position="39"/>
        <end position="46"/>
    </location>
</feature>
<feature type="helix" evidence="9">
    <location>
        <begin position="51"/>
        <end position="65"/>
    </location>
</feature>
<feature type="strand" evidence="7">
    <location>
        <begin position="69"/>
        <end position="71"/>
    </location>
</feature>
<feature type="strand" evidence="9">
    <location>
        <begin position="76"/>
        <end position="78"/>
    </location>
</feature>
<feature type="helix" evidence="9">
    <location>
        <begin position="87"/>
        <end position="89"/>
    </location>
</feature>
<feature type="strand" evidence="9">
    <location>
        <begin position="93"/>
        <end position="97"/>
    </location>
</feature>
<feature type="strand" evidence="9">
    <location>
        <begin position="99"/>
        <end position="106"/>
    </location>
</feature>
<feature type="helix" evidence="9">
    <location>
        <begin position="109"/>
        <end position="111"/>
    </location>
</feature>
<feature type="strand" evidence="7">
    <location>
        <begin position="112"/>
        <end position="115"/>
    </location>
</feature>
<feature type="helix" evidence="9">
    <location>
        <begin position="116"/>
        <end position="119"/>
    </location>
</feature>
<feature type="turn" evidence="10">
    <location>
        <begin position="133"/>
        <end position="136"/>
    </location>
</feature>
<feature type="helix" evidence="8">
    <location>
        <begin position="139"/>
        <end position="141"/>
    </location>
</feature>
<sequence>MAEVEQKKKRTFRKFTYRGVDLDQLLDMSYEQLMQLYSARQRRRLNRGLRRKQHSLLKRLRKAKKEAPPMEKPEVVKTHLRDMIILPEMVGSMVGVYNGKTFNQVEIKPEMIGHYLGEFSITYKPVKHGRPGIGATHSSRFIPLK</sequence>
<evidence type="ECO:0000269" key="1">
    <source>
    </source>
</evidence>
<evidence type="ECO:0000303" key="2">
    <source>
    </source>
</evidence>
<evidence type="ECO:0000305" key="3"/>
<evidence type="ECO:0007744" key="4">
    <source>
    </source>
</evidence>
<evidence type="ECO:0007744" key="5">
    <source>
    </source>
</evidence>
<evidence type="ECO:0007744" key="6">
    <source>
    </source>
</evidence>
<evidence type="ECO:0007829" key="7">
    <source>
        <dbReference type="PDB" id="6ZV6"/>
    </source>
</evidence>
<evidence type="ECO:0007829" key="8">
    <source>
        <dbReference type="PDB" id="6ZXG"/>
    </source>
</evidence>
<evidence type="ECO:0007829" key="9">
    <source>
        <dbReference type="PDB" id="7R4X"/>
    </source>
</evidence>
<evidence type="ECO:0007829" key="10">
    <source>
        <dbReference type="PDB" id="8T4S"/>
    </source>
</evidence>
<gene>
    <name type="primary">RPS15</name>
    <name type="synonym">RIG</name>
</gene>
<dbReference type="EMBL" id="J02984">
    <property type="protein sequence ID" value="AAA36036.1"/>
    <property type="molecule type" value="mRNA"/>
</dbReference>
<dbReference type="EMBL" id="M32405">
    <property type="protein sequence ID" value="AAA36568.1"/>
    <property type="molecule type" value="Genomic_DNA"/>
</dbReference>
<dbReference type="EMBL" id="AF145025">
    <property type="protein sequence ID" value="AAP97277.1"/>
    <property type="molecule type" value="mRNA"/>
</dbReference>
<dbReference type="EMBL" id="BC064908">
    <property type="protein sequence ID" value="AAH64908.1"/>
    <property type="molecule type" value="mRNA"/>
</dbReference>
<dbReference type="EMBL" id="BC105810">
    <property type="protein sequence ID" value="AAI05811.1"/>
    <property type="molecule type" value="mRNA"/>
</dbReference>
<dbReference type="EMBL" id="BC141832">
    <property type="protein sequence ID" value="AAI41833.1"/>
    <property type="molecule type" value="mRNA"/>
</dbReference>
<dbReference type="CCDS" id="CCDS12067.1"/>
<dbReference type="PIR" id="A35908">
    <property type="entry name" value="R3HU15"/>
</dbReference>
<dbReference type="RefSeq" id="NP_001009.1">
    <property type="nucleotide sequence ID" value="NM_001018.5"/>
</dbReference>
<dbReference type="PDB" id="4UG0">
    <property type="method" value="EM"/>
    <property type="chains" value="SP=1-145"/>
</dbReference>
<dbReference type="PDB" id="4V6X">
    <property type="method" value="EM"/>
    <property type="resolution" value="5.00 A"/>
    <property type="chains" value="AP=1-145"/>
</dbReference>
<dbReference type="PDB" id="5A2Q">
    <property type="method" value="EM"/>
    <property type="resolution" value="3.90 A"/>
    <property type="chains" value="P=1-145"/>
</dbReference>
<dbReference type="PDB" id="5AJ0">
    <property type="method" value="EM"/>
    <property type="resolution" value="3.50 A"/>
    <property type="chains" value="BP=1-145"/>
</dbReference>
<dbReference type="PDB" id="5FLX">
    <property type="method" value="EM"/>
    <property type="resolution" value="3.90 A"/>
    <property type="chains" value="P=1-145"/>
</dbReference>
<dbReference type="PDB" id="5LKS">
    <property type="method" value="EM"/>
    <property type="resolution" value="3.60 A"/>
    <property type="chains" value="SP=1-145"/>
</dbReference>
<dbReference type="PDB" id="5OA3">
    <property type="method" value="EM"/>
    <property type="resolution" value="4.30 A"/>
    <property type="chains" value="P=1-145"/>
</dbReference>
<dbReference type="PDB" id="5T2C">
    <property type="method" value="EM"/>
    <property type="resolution" value="3.60 A"/>
    <property type="chains" value="Ax=1-145"/>
</dbReference>
<dbReference type="PDB" id="5VYC">
    <property type="method" value="X-ray"/>
    <property type="resolution" value="6.00 A"/>
    <property type="chains" value="P1/P2/P3/P4/P5/P6=1-145"/>
</dbReference>
<dbReference type="PDB" id="6FEC">
    <property type="method" value="EM"/>
    <property type="resolution" value="6.30 A"/>
    <property type="chains" value="n=4-130"/>
</dbReference>
<dbReference type="PDB" id="6G18">
    <property type="method" value="EM"/>
    <property type="resolution" value="3.60 A"/>
    <property type="chains" value="P=1-145"/>
</dbReference>
<dbReference type="PDB" id="6G4S">
    <property type="method" value="EM"/>
    <property type="resolution" value="4.00 A"/>
    <property type="chains" value="P=1-145"/>
</dbReference>
<dbReference type="PDB" id="6G4W">
    <property type="method" value="EM"/>
    <property type="resolution" value="4.50 A"/>
    <property type="chains" value="P=1-145"/>
</dbReference>
<dbReference type="PDB" id="6G51">
    <property type="method" value="EM"/>
    <property type="resolution" value="4.10 A"/>
    <property type="chains" value="P=1-145"/>
</dbReference>
<dbReference type="PDB" id="6G53">
    <property type="method" value="EM"/>
    <property type="resolution" value="4.50 A"/>
    <property type="chains" value="P=1-145"/>
</dbReference>
<dbReference type="PDB" id="6G5H">
    <property type="method" value="EM"/>
    <property type="resolution" value="3.60 A"/>
    <property type="chains" value="P=1-145"/>
</dbReference>
<dbReference type="PDB" id="6G5I">
    <property type="method" value="EM"/>
    <property type="resolution" value="3.50 A"/>
    <property type="chains" value="P=1-145"/>
</dbReference>
<dbReference type="PDB" id="6IP5">
    <property type="method" value="EM"/>
    <property type="resolution" value="3.90 A"/>
    <property type="chains" value="2w=1-145"/>
</dbReference>
<dbReference type="PDB" id="6IP6">
    <property type="method" value="EM"/>
    <property type="resolution" value="4.50 A"/>
    <property type="chains" value="2w=1-145"/>
</dbReference>
<dbReference type="PDB" id="6IP8">
    <property type="method" value="EM"/>
    <property type="resolution" value="3.90 A"/>
    <property type="chains" value="2w=1-145"/>
</dbReference>
<dbReference type="PDB" id="6OLE">
    <property type="method" value="EM"/>
    <property type="resolution" value="3.10 A"/>
    <property type="chains" value="SP=10-136"/>
</dbReference>
<dbReference type="PDB" id="6OLF">
    <property type="method" value="EM"/>
    <property type="resolution" value="3.90 A"/>
    <property type="chains" value="SP=10-136"/>
</dbReference>
<dbReference type="PDB" id="6OLG">
    <property type="method" value="EM"/>
    <property type="resolution" value="3.40 A"/>
    <property type="chains" value="BP=12-131"/>
</dbReference>
<dbReference type="PDB" id="6OLI">
    <property type="method" value="EM"/>
    <property type="resolution" value="3.50 A"/>
    <property type="chains" value="SP=10-136"/>
</dbReference>
<dbReference type="PDB" id="6OLZ">
    <property type="method" value="EM"/>
    <property type="resolution" value="3.90 A"/>
    <property type="chains" value="BP=12-131"/>
</dbReference>
<dbReference type="PDB" id="6OM0">
    <property type="method" value="EM"/>
    <property type="resolution" value="3.10 A"/>
    <property type="chains" value="SP=10-136"/>
</dbReference>
<dbReference type="PDB" id="6OM7">
    <property type="method" value="EM"/>
    <property type="resolution" value="3.70 A"/>
    <property type="chains" value="SP=10-136"/>
</dbReference>
<dbReference type="PDB" id="6QZP">
    <property type="method" value="EM"/>
    <property type="resolution" value="2.90 A"/>
    <property type="chains" value="SP=10-136"/>
</dbReference>
<dbReference type="PDB" id="6XA1">
    <property type="method" value="EM"/>
    <property type="resolution" value="2.80 A"/>
    <property type="chains" value="SP=13-143"/>
</dbReference>
<dbReference type="PDB" id="6Y0G">
    <property type="method" value="EM"/>
    <property type="resolution" value="3.20 A"/>
    <property type="chains" value="SP=1-145"/>
</dbReference>
<dbReference type="PDB" id="6Y2L">
    <property type="method" value="EM"/>
    <property type="resolution" value="3.00 A"/>
    <property type="chains" value="SP=1-145"/>
</dbReference>
<dbReference type="PDB" id="6Y57">
    <property type="method" value="EM"/>
    <property type="resolution" value="3.50 A"/>
    <property type="chains" value="SP=1-145"/>
</dbReference>
<dbReference type="PDB" id="6YBS">
    <property type="method" value="EM"/>
    <property type="resolution" value="3.10 A"/>
    <property type="chains" value="b=1-145"/>
</dbReference>
<dbReference type="PDB" id="6Z6L">
    <property type="method" value="EM"/>
    <property type="resolution" value="3.00 A"/>
    <property type="chains" value="SP=1-145"/>
</dbReference>
<dbReference type="PDB" id="6Z6M">
    <property type="method" value="EM"/>
    <property type="resolution" value="3.10 A"/>
    <property type="chains" value="SP=1-145"/>
</dbReference>
<dbReference type="PDB" id="6Z6N">
    <property type="method" value="EM"/>
    <property type="resolution" value="2.90 A"/>
    <property type="chains" value="SP=1-145"/>
</dbReference>
<dbReference type="PDB" id="6ZLW">
    <property type="method" value="EM"/>
    <property type="resolution" value="2.60 A"/>
    <property type="chains" value="Q=1-145"/>
</dbReference>
<dbReference type="PDB" id="6ZM7">
    <property type="method" value="EM"/>
    <property type="resolution" value="2.70 A"/>
    <property type="chains" value="SP=1-145"/>
</dbReference>
<dbReference type="PDB" id="6ZME">
    <property type="method" value="EM"/>
    <property type="resolution" value="3.00 A"/>
    <property type="chains" value="SP=1-145"/>
</dbReference>
<dbReference type="PDB" id="6ZMI">
    <property type="method" value="EM"/>
    <property type="resolution" value="2.60 A"/>
    <property type="chains" value="SP=1-145"/>
</dbReference>
<dbReference type="PDB" id="6ZMO">
    <property type="method" value="EM"/>
    <property type="resolution" value="3.10 A"/>
    <property type="chains" value="SP=1-145"/>
</dbReference>
<dbReference type="PDB" id="6ZMT">
    <property type="method" value="EM"/>
    <property type="resolution" value="3.00 A"/>
    <property type="chains" value="Q=1-145"/>
</dbReference>
<dbReference type="PDB" id="6ZMW">
    <property type="method" value="EM"/>
    <property type="resolution" value="3.70 A"/>
    <property type="chains" value="b=1-145"/>
</dbReference>
<dbReference type="PDB" id="6ZN5">
    <property type="method" value="EM"/>
    <property type="resolution" value="3.20 A"/>
    <property type="chains" value="Q=15-134"/>
</dbReference>
<dbReference type="PDB" id="6ZOJ">
    <property type="method" value="EM"/>
    <property type="resolution" value="2.80 A"/>
    <property type="chains" value="P=1-145"/>
</dbReference>
<dbReference type="PDB" id="6ZOL">
    <property type="method" value="EM"/>
    <property type="resolution" value="2.80 A"/>
    <property type="chains" value="P=1-145"/>
</dbReference>
<dbReference type="PDB" id="6ZON">
    <property type="method" value="EM"/>
    <property type="resolution" value="3.00 A"/>
    <property type="chains" value="o=1-145"/>
</dbReference>
<dbReference type="PDB" id="6ZP4">
    <property type="method" value="EM"/>
    <property type="resolution" value="2.90 A"/>
    <property type="chains" value="o=1-145"/>
</dbReference>
<dbReference type="PDB" id="6ZUO">
    <property type="method" value="EM"/>
    <property type="resolution" value="3.10 A"/>
    <property type="chains" value="P=1-145"/>
</dbReference>
<dbReference type="PDB" id="6ZV6">
    <property type="method" value="EM"/>
    <property type="resolution" value="2.90 A"/>
    <property type="chains" value="P=1-145"/>
</dbReference>
<dbReference type="PDB" id="6ZVH">
    <property type="method" value="EM"/>
    <property type="resolution" value="2.90 A"/>
    <property type="chains" value="P=10-138"/>
</dbReference>
<dbReference type="PDB" id="6ZVJ">
    <property type="method" value="EM"/>
    <property type="resolution" value="3.80 A"/>
    <property type="chains" value="o=15-133"/>
</dbReference>
<dbReference type="PDB" id="6ZXD">
    <property type="method" value="EM"/>
    <property type="resolution" value="3.20 A"/>
    <property type="chains" value="P=1-145"/>
</dbReference>
<dbReference type="PDB" id="6ZXE">
    <property type="method" value="EM"/>
    <property type="resolution" value="3.00 A"/>
    <property type="chains" value="P=1-145"/>
</dbReference>
<dbReference type="PDB" id="6ZXF">
    <property type="method" value="EM"/>
    <property type="resolution" value="3.70 A"/>
    <property type="chains" value="P=1-145"/>
</dbReference>
<dbReference type="PDB" id="6ZXG">
    <property type="method" value="EM"/>
    <property type="resolution" value="2.60 A"/>
    <property type="chains" value="P=1-145"/>
</dbReference>
<dbReference type="PDB" id="6ZXH">
    <property type="method" value="EM"/>
    <property type="resolution" value="2.70 A"/>
    <property type="chains" value="P=1-145"/>
</dbReference>
<dbReference type="PDB" id="7A09">
    <property type="method" value="EM"/>
    <property type="resolution" value="3.50 A"/>
    <property type="chains" value="o=1-145"/>
</dbReference>
<dbReference type="PDB" id="7K5I">
    <property type="method" value="EM"/>
    <property type="resolution" value="2.90 A"/>
    <property type="chains" value="P=1-145"/>
</dbReference>
<dbReference type="PDB" id="7QP6">
    <property type="method" value="EM"/>
    <property type="resolution" value="4.70 A"/>
    <property type="chains" value="b=1-145"/>
</dbReference>
<dbReference type="PDB" id="7QP7">
    <property type="method" value="EM"/>
    <property type="resolution" value="3.70 A"/>
    <property type="chains" value="b=1-145"/>
</dbReference>
<dbReference type="PDB" id="7R4X">
    <property type="method" value="EM"/>
    <property type="resolution" value="2.15 A"/>
    <property type="chains" value="P=1-145"/>
</dbReference>
<dbReference type="PDB" id="7TQL">
    <property type="method" value="EM"/>
    <property type="resolution" value="3.40 A"/>
    <property type="chains" value="Q=15-129"/>
</dbReference>
<dbReference type="PDB" id="7WTT">
    <property type="method" value="EM"/>
    <property type="resolution" value="3.10 A"/>
    <property type="chains" value="P=1-145"/>
</dbReference>
<dbReference type="PDB" id="7WTU">
    <property type="method" value="EM"/>
    <property type="resolution" value="3.00 A"/>
    <property type="chains" value="P=1-145"/>
</dbReference>
<dbReference type="PDB" id="7WTV">
    <property type="method" value="EM"/>
    <property type="resolution" value="3.50 A"/>
    <property type="chains" value="P=1-145"/>
</dbReference>
<dbReference type="PDB" id="7WTW">
    <property type="method" value="EM"/>
    <property type="resolution" value="3.20 A"/>
    <property type="chains" value="P=1-145"/>
</dbReference>
<dbReference type="PDB" id="7WTX">
    <property type="method" value="EM"/>
    <property type="resolution" value="3.10 A"/>
    <property type="chains" value="P=1-145"/>
</dbReference>
<dbReference type="PDB" id="7WTZ">
    <property type="method" value="EM"/>
    <property type="resolution" value="3.00 A"/>
    <property type="chains" value="P=1-145"/>
</dbReference>
<dbReference type="PDB" id="7WU0">
    <property type="method" value="EM"/>
    <property type="resolution" value="3.30 A"/>
    <property type="chains" value="P=1-145"/>
</dbReference>
<dbReference type="PDB" id="7XNX">
    <property type="method" value="EM"/>
    <property type="resolution" value="2.70 A"/>
    <property type="chains" value="SP=1-145"/>
</dbReference>
<dbReference type="PDB" id="7XNY">
    <property type="method" value="EM"/>
    <property type="resolution" value="2.50 A"/>
    <property type="chains" value="SP=1-145"/>
</dbReference>
<dbReference type="PDB" id="8G5Y">
    <property type="method" value="EM"/>
    <property type="resolution" value="2.29 A"/>
    <property type="chains" value="SP=1-145"/>
</dbReference>
<dbReference type="PDB" id="8G60">
    <property type="method" value="EM"/>
    <property type="resolution" value="2.54 A"/>
    <property type="chains" value="SP=1-145"/>
</dbReference>
<dbReference type="PDB" id="8G61">
    <property type="method" value="EM"/>
    <property type="resolution" value="2.94 A"/>
    <property type="chains" value="SP=1-145"/>
</dbReference>
<dbReference type="PDB" id="8G6J">
    <property type="method" value="EM"/>
    <property type="resolution" value="2.80 A"/>
    <property type="chains" value="SP=1-145"/>
</dbReference>
<dbReference type="PDB" id="8GLP">
    <property type="method" value="EM"/>
    <property type="resolution" value="1.67 A"/>
    <property type="chains" value="SP=1-145"/>
</dbReference>
<dbReference type="PDB" id="8IFD">
    <property type="method" value="EM"/>
    <property type="resolution" value="2.59 A"/>
    <property type="chains" value="2w=1-145"/>
</dbReference>
<dbReference type="PDB" id="8IFE">
    <property type="method" value="EM"/>
    <property type="resolution" value="2.57 A"/>
    <property type="chains" value="2w=1-145"/>
</dbReference>
<dbReference type="PDB" id="8JDJ">
    <property type="method" value="EM"/>
    <property type="resolution" value="2.50 A"/>
    <property type="chains" value="AB=1-145"/>
</dbReference>
<dbReference type="PDB" id="8JDK">
    <property type="method" value="EM"/>
    <property type="resolution" value="2.26 A"/>
    <property type="chains" value="AB=1-145"/>
</dbReference>
<dbReference type="PDB" id="8JDL">
    <property type="method" value="EM"/>
    <property type="resolution" value="2.42 A"/>
    <property type="chains" value="AB=1-145"/>
</dbReference>
<dbReference type="PDB" id="8JDM">
    <property type="method" value="EM"/>
    <property type="resolution" value="2.67 A"/>
    <property type="chains" value="AB=1-145"/>
</dbReference>
<dbReference type="PDB" id="8K2C">
    <property type="method" value="EM"/>
    <property type="resolution" value="2.40 A"/>
    <property type="chains" value="SP=1-145"/>
</dbReference>
<dbReference type="PDB" id="8OZ0">
    <property type="method" value="EM"/>
    <property type="resolution" value="3.50 A"/>
    <property type="chains" value="j=1-145"/>
</dbReference>
<dbReference type="PDB" id="8PJ1">
    <property type="method" value="EM"/>
    <property type="resolution" value="3.40 A"/>
    <property type="chains" value="b=1-145"/>
</dbReference>
<dbReference type="PDB" id="8PJ2">
    <property type="method" value="EM"/>
    <property type="resolution" value="3.40 A"/>
    <property type="chains" value="b=1-145"/>
</dbReference>
<dbReference type="PDB" id="8PJ3">
    <property type="method" value="EM"/>
    <property type="resolution" value="3.70 A"/>
    <property type="chains" value="b=1-145"/>
</dbReference>
<dbReference type="PDB" id="8PJ4">
    <property type="method" value="EM"/>
    <property type="resolution" value="3.20 A"/>
    <property type="chains" value="b=1-145"/>
</dbReference>
<dbReference type="PDB" id="8PJ5">
    <property type="method" value="EM"/>
    <property type="resolution" value="2.90 A"/>
    <property type="chains" value="b=1-145"/>
</dbReference>
<dbReference type="PDB" id="8PJ6">
    <property type="method" value="EM"/>
    <property type="resolution" value="2.90 A"/>
    <property type="chains" value="b=1-145"/>
</dbReference>
<dbReference type="PDB" id="8PPK">
    <property type="method" value="EM"/>
    <property type="resolution" value="2.98 A"/>
    <property type="chains" value="P=1-145"/>
</dbReference>
<dbReference type="PDB" id="8PPL">
    <property type="method" value="EM"/>
    <property type="resolution" value="2.65 A"/>
    <property type="chains" value="AP=1-145"/>
</dbReference>
<dbReference type="PDB" id="8QOI">
    <property type="method" value="EM"/>
    <property type="resolution" value="1.90 A"/>
    <property type="chains" value="SP=1-145"/>
</dbReference>
<dbReference type="PDB" id="8T4S">
    <property type="method" value="EM"/>
    <property type="resolution" value="2.60 A"/>
    <property type="chains" value="P=1-145"/>
</dbReference>
<dbReference type="PDB" id="8UKB">
    <property type="method" value="EM"/>
    <property type="resolution" value="3.05 A"/>
    <property type="chains" value="SP=16-136"/>
</dbReference>
<dbReference type="PDB" id="8XP2">
    <property type="method" value="EM"/>
    <property type="resolution" value="3.20 A"/>
    <property type="chains" value="SP=1-145"/>
</dbReference>
<dbReference type="PDB" id="8XP3">
    <property type="method" value="EM"/>
    <property type="resolution" value="3.40 A"/>
    <property type="chains" value="SP=1-145"/>
</dbReference>
<dbReference type="PDB" id="8XSX">
    <property type="method" value="EM"/>
    <property type="resolution" value="2.40 A"/>
    <property type="chains" value="SP=1-145"/>
</dbReference>
<dbReference type="PDB" id="8XSY">
    <property type="method" value="EM"/>
    <property type="resolution" value="3.00 A"/>
    <property type="chains" value="SP=1-145"/>
</dbReference>
<dbReference type="PDB" id="8XSZ">
    <property type="method" value="EM"/>
    <property type="resolution" value="3.20 A"/>
    <property type="chains" value="SP=1-145"/>
</dbReference>
<dbReference type="PDB" id="8XXL">
    <property type="method" value="EM"/>
    <property type="resolution" value="2.90 A"/>
    <property type="chains" value="SP=1-145"/>
</dbReference>
<dbReference type="PDB" id="8XXM">
    <property type="method" value="EM"/>
    <property type="resolution" value="3.20 A"/>
    <property type="chains" value="SP=1-145"/>
</dbReference>
<dbReference type="PDB" id="8XXN">
    <property type="method" value="EM"/>
    <property type="resolution" value="3.60 A"/>
    <property type="chains" value="SP=1-145"/>
</dbReference>
<dbReference type="PDB" id="8Y0W">
    <property type="method" value="EM"/>
    <property type="resolution" value="3.40 A"/>
    <property type="chains" value="SP=1-145"/>
</dbReference>
<dbReference type="PDB" id="8Y0X">
    <property type="method" value="EM"/>
    <property type="resolution" value="3.30 A"/>
    <property type="chains" value="SP=1-145"/>
</dbReference>
<dbReference type="PDB" id="8YOO">
    <property type="method" value="EM"/>
    <property type="resolution" value="2.00 A"/>
    <property type="chains" value="SP=1-145"/>
</dbReference>
<dbReference type="PDB" id="8YOP">
    <property type="method" value="EM"/>
    <property type="resolution" value="2.20 A"/>
    <property type="chains" value="SP=1-145"/>
</dbReference>
<dbReference type="PDB" id="8ZDB">
    <property type="method" value="EM"/>
    <property type="resolution" value="3.60 A"/>
    <property type="chains" value="P=1-145"/>
</dbReference>
<dbReference type="PDB" id="8ZDC">
    <property type="method" value="EM"/>
    <property type="resolution" value="3.80 A"/>
    <property type="chains" value="P=1-145"/>
</dbReference>
<dbReference type="PDB" id="8ZDD">
    <property type="method" value="EM"/>
    <property type="resolution" value="3.70 A"/>
    <property type="chains" value="P=1-145"/>
</dbReference>
<dbReference type="PDB" id="9BKD">
    <property type="method" value="EM"/>
    <property type="resolution" value="2.60 A"/>
    <property type="chains" value="b=1-145"/>
</dbReference>
<dbReference type="PDB" id="9BLN">
    <property type="method" value="EM"/>
    <property type="resolution" value="3.90 A"/>
    <property type="chains" value="b=1-145"/>
</dbReference>
<dbReference type="PDB" id="9C3H">
    <property type="method" value="EM"/>
    <property type="resolution" value="2.00 A"/>
    <property type="chains" value="SP=1-145"/>
</dbReference>
<dbReference type="PDB" id="9G8M">
    <property type="method" value="EM"/>
    <property type="resolution" value="3.30 A"/>
    <property type="chains" value="SP=1-145"/>
</dbReference>
<dbReference type="PDB" id="9G8O">
    <property type="method" value="EM"/>
    <property type="resolution" value="3.40 A"/>
    <property type="chains" value="SP=1-145"/>
</dbReference>
<dbReference type="PDBsum" id="4UG0"/>
<dbReference type="PDBsum" id="4V6X"/>
<dbReference type="PDBsum" id="5A2Q"/>
<dbReference type="PDBsum" id="5AJ0"/>
<dbReference type="PDBsum" id="5FLX"/>
<dbReference type="PDBsum" id="5LKS"/>
<dbReference type="PDBsum" id="5OA3"/>
<dbReference type="PDBsum" id="5T2C"/>
<dbReference type="PDBsum" id="5VYC"/>
<dbReference type="PDBsum" id="6FEC"/>
<dbReference type="PDBsum" id="6G18"/>
<dbReference type="PDBsum" id="6G4S"/>
<dbReference type="PDBsum" id="6G4W"/>
<dbReference type="PDBsum" id="6G51"/>
<dbReference type="PDBsum" id="6G53"/>
<dbReference type="PDBsum" id="6G5H"/>
<dbReference type="PDBsum" id="6G5I"/>
<dbReference type="PDBsum" id="6IP5"/>
<dbReference type="PDBsum" id="6IP6"/>
<dbReference type="PDBsum" id="6IP8"/>
<dbReference type="PDBsum" id="6OLE"/>
<dbReference type="PDBsum" id="6OLF"/>
<dbReference type="PDBsum" id="6OLG"/>
<dbReference type="PDBsum" id="6OLI"/>
<dbReference type="PDBsum" id="6OLZ"/>
<dbReference type="PDBsum" id="6OM0"/>
<dbReference type="PDBsum" id="6OM7"/>
<dbReference type="PDBsum" id="6QZP"/>
<dbReference type="PDBsum" id="6XA1"/>
<dbReference type="PDBsum" id="6Y0G"/>
<dbReference type="PDBsum" id="6Y2L"/>
<dbReference type="PDBsum" id="6Y57"/>
<dbReference type="PDBsum" id="6YBS"/>
<dbReference type="PDBsum" id="6Z6L"/>
<dbReference type="PDBsum" id="6Z6M"/>
<dbReference type="PDBsum" id="6Z6N"/>
<dbReference type="PDBsum" id="6ZLW"/>
<dbReference type="PDBsum" id="6ZM7"/>
<dbReference type="PDBsum" id="6ZME"/>
<dbReference type="PDBsum" id="6ZMI"/>
<dbReference type="PDBsum" id="6ZMO"/>
<dbReference type="PDBsum" id="6ZMT"/>
<dbReference type="PDBsum" id="6ZMW"/>
<dbReference type="PDBsum" id="6ZN5"/>
<dbReference type="PDBsum" id="6ZOJ"/>
<dbReference type="PDBsum" id="6ZOL"/>
<dbReference type="PDBsum" id="6ZON"/>
<dbReference type="PDBsum" id="6ZP4"/>
<dbReference type="PDBsum" id="6ZUO"/>
<dbReference type="PDBsum" id="6ZV6"/>
<dbReference type="PDBsum" id="6ZVH"/>
<dbReference type="PDBsum" id="6ZVJ"/>
<dbReference type="PDBsum" id="6ZXD"/>
<dbReference type="PDBsum" id="6ZXE"/>
<dbReference type="PDBsum" id="6ZXF"/>
<dbReference type="PDBsum" id="6ZXG"/>
<dbReference type="PDBsum" id="6ZXH"/>
<dbReference type="PDBsum" id="7A09"/>
<dbReference type="PDBsum" id="7K5I"/>
<dbReference type="PDBsum" id="7QP6"/>
<dbReference type="PDBsum" id="7QP7"/>
<dbReference type="PDBsum" id="7R4X"/>
<dbReference type="PDBsum" id="7TQL"/>
<dbReference type="PDBsum" id="7WTT"/>
<dbReference type="PDBsum" id="7WTU"/>
<dbReference type="PDBsum" id="7WTV"/>
<dbReference type="PDBsum" id="7WTW"/>
<dbReference type="PDBsum" id="7WTX"/>
<dbReference type="PDBsum" id="7WTZ"/>
<dbReference type="PDBsum" id="7WU0"/>
<dbReference type="PDBsum" id="7XNX"/>
<dbReference type="PDBsum" id="7XNY"/>
<dbReference type="PDBsum" id="8G5Y"/>
<dbReference type="PDBsum" id="8G60"/>
<dbReference type="PDBsum" id="8G61"/>
<dbReference type="PDBsum" id="8G6J"/>
<dbReference type="PDBsum" id="8GLP"/>
<dbReference type="PDBsum" id="8IFD"/>
<dbReference type="PDBsum" id="8IFE"/>
<dbReference type="PDBsum" id="8JDJ"/>
<dbReference type="PDBsum" id="8JDK"/>
<dbReference type="PDBsum" id="8JDL"/>
<dbReference type="PDBsum" id="8JDM"/>
<dbReference type="PDBsum" id="8K2C"/>
<dbReference type="PDBsum" id="8OZ0"/>
<dbReference type="PDBsum" id="8PJ1"/>
<dbReference type="PDBsum" id="8PJ2"/>
<dbReference type="PDBsum" id="8PJ3"/>
<dbReference type="PDBsum" id="8PJ4"/>
<dbReference type="PDBsum" id="8PJ5"/>
<dbReference type="PDBsum" id="8PJ6"/>
<dbReference type="PDBsum" id="8PPK"/>
<dbReference type="PDBsum" id="8PPL"/>
<dbReference type="PDBsum" id="8QOI"/>
<dbReference type="PDBsum" id="8T4S"/>
<dbReference type="PDBsum" id="8UKB"/>
<dbReference type="PDBsum" id="8XP2"/>
<dbReference type="PDBsum" id="8XP3"/>
<dbReference type="PDBsum" id="8XSX"/>
<dbReference type="PDBsum" id="8XSY"/>
<dbReference type="PDBsum" id="8XSZ"/>
<dbReference type="PDBsum" id="8XXL"/>
<dbReference type="PDBsum" id="8XXM"/>
<dbReference type="PDBsum" id="8XXN"/>
<dbReference type="PDBsum" id="8Y0W"/>
<dbReference type="PDBsum" id="8Y0X"/>
<dbReference type="PDBsum" id="8YOO"/>
<dbReference type="PDBsum" id="8YOP"/>
<dbReference type="PDBsum" id="8ZDB"/>
<dbReference type="PDBsum" id="8ZDC"/>
<dbReference type="PDBsum" id="8ZDD"/>
<dbReference type="PDBsum" id="9BKD"/>
<dbReference type="PDBsum" id="9BLN"/>
<dbReference type="PDBsum" id="9C3H"/>
<dbReference type="PDBsum" id="9G8M"/>
<dbReference type="PDBsum" id="9G8O"/>
<dbReference type="EMDB" id="EMD-10668"/>
<dbReference type="EMDB" id="EMD-10674"/>
<dbReference type="EMDB" id="EMD-10690"/>
<dbReference type="EMDB" id="EMD-10772"/>
<dbReference type="EMDB" id="EMD-11098"/>
<dbReference type="EMDB" id="EMD-11099"/>
<dbReference type="EMDB" id="EMD-11100"/>
<dbReference type="EMDB" id="EMD-11276"/>
<dbReference type="EMDB" id="EMD-11288"/>
<dbReference type="EMDB" id="EMD-11289"/>
<dbReference type="EMDB" id="EMD-11292"/>
<dbReference type="EMDB" id="EMD-11299"/>
<dbReference type="EMDB" id="EMD-11301"/>
<dbReference type="EMDB" id="EMD-11302"/>
<dbReference type="EMDB" id="EMD-11310"/>
<dbReference type="EMDB" id="EMD-11320"/>
<dbReference type="EMDB" id="EMD-11322"/>
<dbReference type="EMDB" id="EMD-11325"/>
<dbReference type="EMDB" id="EMD-11335"/>
<dbReference type="EMDB" id="EMD-11440"/>
<dbReference type="EMDB" id="EMD-11441"/>
<dbReference type="EMDB" id="EMD-11456"/>
<dbReference type="EMDB" id="EMD-11458"/>
<dbReference type="EMDB" id="EMD-11517"/>
<dbReference type="EMDB" id="EMD-11518"/>
<dbReference type="EMDB" id="EMD-11519"/>
<dbReference type="EMDB" id="EMD-11520"/>
<dbReference type="EMDB" id="EMD-11521"/>
<dbReference type="EMDB" id="EMD-11602"/>
<dbReference type="EMDB" id="EMD-14113"/>
<dbReference type="EMDB" id="EMD-14114"/>
<dbReference type="EMDB" id="EMD-14317"/>
<dbReference type="EMDB" id="EMD-17297"/>
<dbReference type="EMDB" id="EMD-17696"/>
<dbReference type="EMDB" id="EMD-17697"/>
<dbReference type="EMDB" id="EMD-17698"/>
<dbReference type="EMDB" id="EMD-17699"/>
<dbReference type="EMDB" id="EMD-17700"/>
<dbReference type="EMDB" id="EMD-17701"/>
<dbReference type="EMDB" id="EMD-17804"/>
<dbReference type="EMDB" id="EMD-17805"/>
<dbReference type="EMDB" id="EMD-18539"/>
<dbReference type="EMDB" id="EMD-22681"/>
<dbReference type="EMDB" id="EMD-26067"/>
<dbReference type="EMDB" id="EMD-29757"/>
<dbReference type="EMDB" id="EMD-29758"/>
<dbReference type="EMDB" id="EMD-29759"/>
<dbReference type="EMDB" id="EMD-29760"/>
<dbReference type="EMDB" id="EMD-29771"/>
<dbReference type="EMDB" id="EMD-32800"/>
<dbReference type="EMDB" id="EMD-32801"/>
<dbReference type="EMDB" id="EMD-32802"/>
<dbReference type="EMDB" id="EMD-32803"/>
<dbReference type="EMDB" id="EMD-32804"/>
<dbReference type="EMDB" id="EMD-32806"/>
<dbReference type="EMDB" id="EMD-32807"/>
<dbReference type="EMDB" id="EMD-33329"/>
<dbReference type="EMDB" id="EMD-33330"/>
<dbReference type="EMDB" id="EMD-35413"/>
<dbReference type="EMDB" id="EMD-35414"/>
<dbReference type="EMDB" id="EMD-36178"/>
<dbReference type="EMDB" id="EMD-36179"/>
<dbReference type="EMDB" id="EMD-36180"/>
<dbReference type="EMDB" id="EMD-36181"/>
<dbReference type="EMDB" id="EMD-36838"/>
<dbReference type="EMDB" id="EMD-3770"/>
<dbReference type="EMDB" id="EMD-38548"/>
<dbReference type="EMDB" id="EMD-38549"/>
<dbReference type="EMDB" id="EMD-38629"/>
<dbReference type="EMDB" id="EMD-38630"/>
<dbReference type="EMDB" id="EMD-38631"/>
<dbReference type="EMDB" id="EMD-38752"/>
<dbReference type="EMDB" id="EMD-38753"/>
<dbReference type="EMDB" id="EMD-38754"/>
<dbReference type="EMDB" id="EMD-3883"/>
<dbReference type="EMDB" id="EMD-39455"/>
<dbReference type="EMDB" id="EMD-39456"/>
<dbReference type="EMDB" id="EMD-39956"/>
<dbReference type="EMDB" id="EMD-39957"/>
<dbReference type="EMDB" id="EMD-39958"/>
<dbReference type="EMDB" id="EMD-40205"/>
<dbReference type="EMDB" id="EMD-4070"/>
<dbReference type="EMDB" id="EMD-41039"/>
<dbReference type="EMDB" id="EMD-42351"/>
<dbReference type="EMDB" id="EMD-4242"/>
<dbReference type="EMDB" id="EMD-4337"/>
<dbReference type="EMDB" id="EMD-4348"/>
<dbReference type="EMDB" id="EMD-4349"/>
<dbReference type="EMDB" id="EMD-4350"/>
<dbReference type="EMDB" id="EMD-4351"/>
<dbReference type="EMDB" id="EMD-4352"/>
<dbReference type="EMDB" id="EMD-4353"/>
<dbReference type="EMDB" id="EMD-44641"/>
<dbReference type="EMDB" id="EMD-44671"/>
<dbReference type="EMDB" id="EMD-45170"/>
<dbReference type="EMDB" id="EMD-51132"/>
<dbReference type="EMDB" id="EMD-51134"/>
<dbReference type="EMDB" id="EMD-9701"/>
<dbReference type="EMDB" id="EMD-9702"/>
<dbReference type="EMDB" id="EMD-9703"/>
<dbReference type="SMR" id="P62841"/>
<dbReference type="BioGRID" id="112123">
    <property type="interactions" value="447"/>
</dbReference>
<dbReference type="ComplexPortal" id="CPX-5223">
    <property type="entry name" value="40S cytosolic small ribosomal subunit"/>
</dbReference>
<dbReference type="CORUM" id="P62841"/>
<dbReference type="FunCoup" id="P62841">
    <property type="interactions" value="2555"/>
</dbReference>
<dbReference type="IntAct" id="P62841">
    <property type="interactions" value="196"/>
</dbReference>
<dbReference type="MINT" id="P62841"/>
<dbReference type="STRING" id="9606.ENSP00000466010"/>
<dbReference type="GlyGen" id="P62841">
    <property type="glycosylation" value="1 site, 1 O-linked glycan (1 site)"/>
</dbReference>
<dbReference type="iPTMnet" id="P62841"/>
<dbReference type="MetOSite" id="P62841"/>
<dbReference type="PhosphoSitePlus" id="P62841"/>
<dbReference type="SwissPalm" id="P62841"/>
<dbReference type="BioMuta" id="RPS15"/>
<dbReference type="DMDM" id="51338641"/>
<dbReference type="jPOST" id="P62841"/>
<dbReference type="MassIVE" id="P62841"/>
<dbReference type="PaxDb" id="9606-ENSP00000467466"/>
<dbReference type="PeptideAtlas" id="P62841"/>
<dbReference type="ProteomicsDB" id="57433"/>
<dbReference type="Pumba" id="P62841"/>
<dbReference type="TopDownProteomics" id="P62841"/>
<dbReference type="Antibodypedia" id="22700">
    <property type="antibodies" value="217 antibodies from 28 providers"/>
</dbReference>
<dbReference type="DNASU" id="6209"/>
<dbReference type="Ensembl" id="ENST00000592588.7">
    <property type="protein sequence ID" value="ENSP00000467466.3"/>
    <property type="gene ID" value="ENSG00000115268.10"/>
</dbReference>
<dbReference type="GeneID" id="6209"/>
<dbReference type="KEGG" id="hsa:6209"/>
<dbReference type="MANE-Select" id="ENST00000592588.7">
    <property type="protein sequence ID" value="ENSP00000467466.3"/>
    <property type="RefSeq nucleotide sequence ID" value="NM_001018.5"/>
    <property type="RefSeq protein sequence ID" value="NP_001009.1"/>
</dbReference>
<dbReference type="UCSC" id="uc002lsp.2">
    <property type="organism name" value="human"/>
</dbReference>
<dbReference type="AGR" id="HGNC:10388"/>
<dbReference type="CTD" id="6209"/>
<dbReference type="DisGeNET" id="6209"/>
<dbReference type="GeneCards" id="RPS15"/>
<dbReference type="HGNC" id="HGNC:10388">
    <property type="gene designation" value="RPS15"/>
</dbReference>
<dbReference type="HPA" id="ENSG00000115268">
    <property type="expression patterns" value="Low tissue specificity"/>
</dbReference>
<dbReference type="MalaCards" id="RPS15"/>
<dbReference type="MIM" id="180535">
    <property type="type" value="gene"/>
</dbReference>
<dbReference type="neXtProt" id="NX_P62841"/>
<dbReference type="OpenTargets" id="ENSG00000115268"/>
<dbReference type="Orphanet" id="67038">
    <property type="disease" value="B-cell chronic lymphocytic leukemia"/>
</dbReference>
<dbReference type="PharmGKB" id="PA34787"/>
<dbReference type="VEuPathDB" id="HostDB:ENSG00000115268"/>
<dbReference type="eggNOG" id="KOG0898">
    <property type="taxonomic scope" value="Eukaryota"/>
</dbReference>
<dbReference type="GeneTree" id="ENSGT00390000000475"/>
<dbReference type="InParanoid" id="P62841"/>
<dbReference type="OMA" id="KTHCRDM"/>
<dbReference type="OrthoDB" id="10258210at2759"/>
<dbReference type="PAN-GO" id="P62841">
    <property type="GO annotations" value="3 GO annotations based on evolutionary models"/>
</dbReference>
<dbReference type="PhylomeDB" id="P62841"/>
<dbReference type="PathwayCommons" id="P62841"/>
<dbReference type="Reactome" id="R-HSA-156827">
    <property type="pathway name" value="L13a-mediated translational silencing of Ceruloplasmin expression"/>
</dbReference>
<dbReference type="Reactome" id="R-HSA-156902">
    <property type="pathway name" value="Peptide chain elongation"/>
</dbReference>
<dbReference type="Reactome" id="R-HSA-1799339">
    <property type="pathway name" value="SRP-dependent cotranslational protein targeting to membrane"/>
</dbReference>
<dbReference type="Reactome" id="R-HSA-192823">
    <property type="pathway name" value="Viral mRNA Translation"/>
</dbReference>
<dbReference type="Reactome" id="R-HSA-2408557">
    <property type="pathway name" value="Selenocysteine synthesis"/>
</dbReference>
<dbReference type="Reactome" id="R-HSA-6791226">
    <property type="pathway name" value="Major pathway of rRNA processing in the nucleolus and cytosol"/>
</dbReference>
<dbReference type="Reactome" id="R-HSA-72649">
    <property type="pathway name" value="Translation initiation complex formation"/>
</dbReference>
<dbReference type="Reactome" id="R-HSA-72689">
    <property type="pathway name" value="Formation of a pool of free 40S subunits"/>
</dbReference>
<dbReference type="Reactome" id="R-HSA-72695">
    <property type="pathway name" value="Formation of the ternary complex, and subsequently, the 43S complex"/>
</dbReference>
<dbReference type="Reactome" id="R-HSA-72702">
    <property type="pathway name" value="Ribosomal scanning and start codon recognition"/>
</dbReference>
<dbReference type="Reactome" id="R-HSA-72706">
    <property type="pathway name" value="GTP hydrolysis and joining of the 60S ribosomal subunit"/>
</dbReference>
<dbReference type="Reactome" id="R-HSA-72764">
    <property type="pathway name" value="Eukaryotic Translation Termination"/>
</dbReference>
<dbReference type="Reactome" id="R-HSA-9010553">
    <property type="pathway name" value="Regulation of expression of SLITs and ROBOs"/>
</dbReference>
<dbReference type="Reactome" id="R-HSA-9633012">
    <property type="pathway name" value="Response of EIF2AK4 (GCN2) to amino acid deficiency"/>
</dbReference>
<dbReference type="Reactome" id="R-HSA-9735869">
    <property type="pathway name" value="SARS-CoV-1 modulates host translation machinery"/>
</dbReference>
<dbReference type="Reactome" id="R-HSA-9754678">
    <property type="pathway name" value="SARS-CoV-2 modulates host translation machinery"/>
</dbReference>
<dbReference type="Reactome" id="R-HSA-975956">
    <property type="pathway name" value="Nonsense Mediated Decay (NMD) independent of the Exon Junction Complex (EJC)"/>
</dbReference>
<dbReference type="Reactome" id="R-HSA-975957">
    <property type="pathway name" value="Nonsense Mediated Decay (NMD) enhanced by the Exon Junction Complex (EJC)"/>
</dbReference>
<dbReference type="SignaLink" id="P62841"/>
<dbReference type="SIGNOR" id="P62841"/>
<dbReference type="BioGRID-ORCS" id="6209">
    <property type="hits" value="807 hits in 1093 CRISPR screens"/>
</dbReference>
<dbReference type="CD-CODE" id="232F8A39">
    <property type="entry name" value="P-body"/>
</dbReference>
<dbReference type="CD-CODE" id="91857CE7">
    <property type="entry name" value="Nucleolus"/>
</dbReference>
<dbReference type="ChiTaRS" id="RPS15">
    <property type="organism name" value="human"/>
</dbReference>
<dbReference type="EvolutionaryTrace" id="P62841"/>
<dbReference type="GeneWiki" id="RPS15"/>
<dbReference type="GenomeRNAi" id="6209"/>
<dbReference type="Pharos" id="P62841">
    <property type="development level" value="Tbio"/>
</dbReference>
<dbReference type="PRO" id="PR:P62841"/>
<dbReference type="Proteomes" id="UP000005640">
    <property type="component" value="Chromosome 19"/>
</dbReference>
<dbReference type="RNAct" id="P62841">
    <property type="molecule type" value="protein"/>
</dbReference>
<dbReference type="Bgee" id="ENSG00000115268">
    <property type="expression patterns" value="Expressed in pituitary gland and 101 other cell types or tissues"/>
</dbReference>
<dbReference type="ExpressionAtlas" id="P62841">
    <property type="expression patterns" value="baseline and differential"/>
</dbReference>
<dbReference type="GO" id="GO:0005737">
    <property type="term" value="C:cytoplasm"/>
    <property type="evidence" value="ECO:0000303"/>
    <property type="project" value="ComplexPortal"/>
</dbReference>
<dbReference type="GO" id="GO:0005829">
    <property type="term" value="C:cytosol"/>
    <property type="evidence" value="ECO:0000304"/>
    <property type="project" value="Reactome"/>
</dbReference>
<dbReference type="GO" id="GO:0022626">
    <property type="term" value="C:cytosolic ribosome"/>
    <property type="evidence" value="ECO:0000314"/>
    <property type="project" value="FlyBase"/>
</dbReference>
<dbReference type="GO" id="GO:0022627">
    <property type="term" value="C:cytosolic small ribosomal subunit"/>
    <property type="evidence" value="ECO:0000314"/>
    <property type="project" value="UniProtKB"/>
</dbReference>
<dbReference type="GO" id="GO:0005925">
    <property type="term" value="C:focal adhesion"/>
    <property type="evidence" value="ECO:0007005"/>
    <property type="project" value="UniProtKB"/>
</dbReference>
<dbReference type="GO" id="GO:0016020">
    <property type="term" value="C:membrane"/>
    <property type="evidence" value="ECO:0007005"/>
    <property type="project" value="UniProtKB"/>
</dbReference>
<dbReference type="GO" id="GO:0005654">
    <property type="term" value="C:nucleoplasm"/>
    <property type="evidence" value="ECO:0000304"/>
    <property type="project" value="Reactome"/>
</dbReference>
<dbReference type="GO" id="GO:0005634">
    <property type="term" value="C:nucleus"/>
    <property type="evidence" value="ECO:0000303"/>
    <property type="project" value="UniProtKB"/>
</dbReference>
<dbReference type="GO" id="GO:0045202">
    <property type="term" value="C:synapse"/>
    <property type="evidence" value="ECO:0007669"/>
    <property type="project" value="Ensembl"/>
</dbReference>
<dbReference type="GO" id="GO:0003677">
    <property type="term" value="F:DNA binding"/>
    <property type="evidence" value="ECO:0000303"/>
    <property type="project" value="UniProtKB"/>
</dbReference>
<dbReference type="GO" id="GO:0097371">
    <property type="term" value="F:MDM2/MDM4 family protein binding"/>
    <property type="evidence" value="ECO:0000353"/>
    <property type="project" value="FlyBase"/>
</dbReference>
<dbReference type="GO" id="GO:0003723">
    <property type="term" value="F:RNA binding"/>
    <property type="evidence" value="ECO:0007005"/>
    <property type="project" value="UniProtKB"/>
</dbReference>
<dbReference type="GO" id="GO:0003735">
    <property type="term" value="F:structural constituent of ribosome"/>
    <property type="evidence" value="ECO:0000314"/>
    <property type="project" value="FlyBase"/>
</dbReference>
<dbReference type="GO" id="GO:1990948">
    <property type="term" value="F:ubiquitin ligase inhibitor activity"/>
    <property type="evidence" value="ECO:0000314"/>
    <property type="project" value="FlyBase"/>
</dbReference>
<dbReference type="GO" id="GO:0002181">
    <property type="term" value="P:cytoplasmic translation"/>
    <property type="evidence" value="ECO:0000303"/>
    <property type="project" value="ComplexPortal"/>
</dbReference>
<dbReference type="GO" id="GO:0097421">
    <property type="term" value="P:liver regeneration"/>
    <property type="evidence" value="ECO:0007669"/>
    <property type="project" value="Ensembl"/>
</dbReference>
<dbReference type="GO" id="GO:0001649">
    <property type="term" value="P:osteoblast differentiation"/>
    <property type="evidence" value="ECO:0007005"/>
    <property type="project" value="UniProtKB"/>
</dbReference>
<dbReference type="GO" id="GO:1901798">
    <property type="term" value="P:positive regulation of signal transduction by p53 class mediator"/>
    <property type="evidence" value="ECO:0000314"/>
    <property type="project" value="FlyBase"/>
</dbReference>
<dbReference type="GO" id="GO:0000028">
    <property type="term" value="P:ribosomal small subunit assembly"/>
    <property type="evidence" value="ECO:0000318"/>
    <property type="project" value="GO_Central"/>
</dbReference>
<dbReference type="GO" id="GO:0042274">
    <property type="term" value="P:ribosomal small subunit biogenesis"/>
    <property type="evidence" value="ECO:0000315"/>
    <property type="project" value="UniProtKB"/>
</dbReference>
<dbReference type="GO" id="GO:0000056">
    <property type="term" value="P:ribosomal small subunit export from nucleus"/>
    <property type="evidence" value="ECO:0000315"/>
    <property type="project" value="UniProtKB"/>
</dbReference>
<dbReference type="GO" id="GO:0006364">
    <property type="term" value="P:rRNA processing"/>
    <property type="evidence" value="ECO:0000315"/>
    <property type="project" value="UniProtKB"/>
</dbReference>
<dbReference type="GO" id="GO:0006412">
    <property type="term" value="P:translation"/>
    <property type="evidence" value="ECO:0000305"/>
    <property type="project" value="UniProtKB"/>
</dbReference>
<dbReference type="FunFam" id="3.30.860.10:FF:000002">
    <property type="entry name" value="40S ribosomal protein S15"/>
    <property type="match status" value="1"/>
</dbReference>
<dbReference type="Gene3D" id="3.30.860.10">
    <property type="entry name" value="30s Ribosomal Protein S19, Chain A"/>
    <property type="match status" value="1"/>
</dbReference>
<dbReference type="HAMAP" id="MF_00531">
    <property type="entry name" value="Ribosomal_uS19"/>
    <property type="match status" value="1"/>
</dbReference>
<dbReference type="InterPro" id="IPR002222">
    <property type="entry name" value="Ribosomal_uS19"/>
</dbReference>
<dbReference type="InterPro" id="IPR020934">
    <property type="entry name" value="Ribosomal_uS19_CS"/>
</dbReference>
<dbReference type="InterPro" id="IPR005713">
    <property type="entry name" value="Ribosomal_uS19_euk/arc"/>
</dbReference>
<dbReference type="InterPro" id="IPR023575">
    <property type="entry name" value="Ribosomal_uS19_SF"/>
</dbReference>
<dbReference type="NCBIfam" id="NF003121">
    <property type="entry name" value="PRK04038.1"/>
    <property type="match status" value="1"/>
</dbReference>
<dbReference type="NCBIfam" id="TIGR01025">
    <property type="entry name" value="uS19_arch"/>
    <property type="match status" value="1"/>
</dbReference>
<dbReference type="PANTHER" id="PTHR11880">
    <property type="entry name" value="RIBOSOMAL PROTEIN S19P FAMILY MEMBER"/>
    <property type="match status" value="1"/>
</dbReference>
<dbReference type="PANTHER" id="PTHR11880:SF2">
    <property type="entry name" value="SMALL RIBOSOMAL SUBUNIT PROTEIN US19"/>
    <property type="match status" value="1"/>
</dbReference>
<dbReference type="Pfam" id="PF00203">
    <property type="entry name" value="Ribosomal_S19"/>
    <property type="match status" value="1"/>
</dbReference>
<dbReference type="PIRSF" id="PIRSF002144">
    <property type="entry name" value="Ribosomal_S19"/>
    <property type="match status" value="1"/>
</dbReference>
<dbReference type="PRINTS" id="PR00975">
    <property type="entry name" value="RIBOSOMALS19"/>
</dbReference>
<dbReference type="SUPFAM" id="SSF54570">
    <property type="entry name" value="Ribosomal protein S19"/>
    <property type="match status" value="1"/>
</dbReference>
<dbReference type="PROSITE" id="PS00323">
    <property type="entry name" value="RIBOSOMAL_S19"/>
    <property type="match status" value="1"/>
</dbReference>
<reference key="1">
    <citation type="journal article" date="1987" name="Proc. Natl. Acad. Sci. U.S.A.">
        <title>Evolutionary conservation of the insulinoma gene rig and its possible function.</title>
        <authorList>
            <person name="Inoue C."/>
            <person name="Shiga K."/>
            <person name="Takasawa S."/>
            <person name="Kitagawa M."/>
            <person name="Yamamoto H."/>
            <person name="Okamoto H."/>
        </authorList>
    </citation>
    <scope>NUCLEOTIDE SEQUENCE [MRNA]</scope>
</reference>
<reference key="2">
    <citation type="journal article" date="1990" name="Proc. Natl. Acad. Sci. U.S.A.">
        <title>Isolation and characterization of the human homologue of rig and its pseudogenes: the functional gene has features characteristic of housekeeping genes.</title>
        <authorList>
            <person name="Shiga K."/>
            <person name="Yamamoto H."/>
            <person name="Okamoto H."/>
        </authorList>
    </citation>
    <scope>NUCLEOTIDE SEQUENCE [GENOMIC DNA]</scope>
</reference>
<reference key="3">
    <citation type="submission" date="1999-04" db="EMBL/GenBank/DDBJ databases">
        <title>Cloning and characterization of human insulinoma protein.</title>
        <authorList>
            <person name="Yu L."/>
            <person name="Zhao S.Y."/>
        </authorList>
    </citation>
    <scope>NUCLEOTIDE SEQUENCE [MRNA]</scope>
</reference>
<reference key="4">
    <citation type="journal article" date="2004" name="Genome Res.">
        <title>The status, quality, and expansion of the NIH full-length cDNA project: the Mammalian Gene Collection (MGC).</title>
        <authorList>
            <consortium name="The MGC Project Team"/>
        </authorList>
    </citation>
    <scope>NUCLEOTIDE SEQUENCE [LARGE SCALE MRNA]</scope>
    <source>
        <tissue>Pancreas</tissue>
    </source>
</reference>
<reference key="5">
    <citation type="journal article" date="1992" name="AIDS">
        <title>Progressive spastic myelopathy in a patient co-infected with HIV-1 and HTLV-II: autoantibodies to the human homologue of rig in blood and cerebrospinal fluid.</title>
        <authorList>
            <person name="Rosenblatt J.D."/>
            <person name="Tomkins P."/>
            <person name="Rosenthal M."/>
            <person name="Kacena A."/>
            <person name="Chan G."/>
            <person name="Valderama R."/>
            <person name="Harrington W. Jr."/>
            <person name="Saxton E."/>
            <person name="Diagne A."/>
            <person name="Zhao J.-Q."/>
            <person name="Mitsuyasu R.T."/>
            <person name="Weisbart R.H."/>
        </authorList>
    </citation>
    <scope>NUCLEOTIDE SEQUENCE [MRNA] OF 11-145</scope>
    <source>
        <tissue>Brain</tissue>
    </source>
</reference>
<reference key="6">
    <citation type="journal article" date="1996" name="Eur. J. Biochem.">
        <title>Characterization of the human small-ribosomal-subunit proteins by N-terminal and internal sequencing, and mass spectrometry.</title>
        <authorList>
            <person name="Vladimirov S.N."/>
            <person name="Ivanov A.V."/>
            <person name="Karpova G.G."/>
            <person name="Musolyamov A.K."/>
            <person name="Egorov T.A."/>
            <person name="Thiede B."/>
            <person name="Wittmann-Liebold B."/>
            <person name="Otto A."/>
        </authorList>
    </citation>
    <scope>PROTEIN SEQUENCE OF 101-116</scope>
    <source>
        <tissue>Placenta</tissue>
    </source>
</reference>
<reference key="7">
    <citation type="journal article" date="2003" name="Nature">
        <title>Proteomic characterization of the human centrosome by protein correlation profiling.</title>
        <authorList>
            <person name="Andersen J.S."/>
            <person name="Wilkinson C.J."/>
            <person name="Mayor T."/>
            <person name="Mortensen P."/>
            <person name="Nigg E.A."/>
            <person name="Mann M."/>
        </authorList>
    </citation>
    <scope>IDENTIFICATION BY MASS SPECTROMETRY</scope>
    <source>
        <tissue>Lymphoblast</tissue>
    </source>
</reference>
<reference key="8">
    <citation type="journal article" date="2009" name="Anal. Chem.">
        <title>Lys-N and trypsin cover complementary parts of the phosphoproteome in a refined SCX-based approach.</title>
        <authorList>
            <person name="Gauci S."/>
            <person name="Helbig A.O."/>
            <person name="Slijper M."/>
            <person name="Krijgsveld J."/>
            <person name="Heck A.J."/>
            <person name="Mohammed S."/>
        </authorList>
    </citation>
    <scope>ACETYLATION [LARGE SCALE ANALYSIS] AT ALA-2</scope>
    <scope>CLEAVAGE OF INITIATOR METHIONINE [LARGE SCALE ANALYSIS]</scope>
    <scope>IDENTIFICATION BY MASS SPECTROMETRY [LARGE SCALE ANALYSIS]</scope>
</reference>
<reference key="9">
    <citation type="journal article" date="2011" name="BMC Syst. Biol.">
        <title>Initial characterization of the human central proteome.</title>
        <authorList>
            <person name="Burkard T.R."/>
            <person name="Planyavsky M."/>
            <person name="Kaupe I."/>
            <person name="Breitwieser F.P."/>
            <person name="Buerckstuemmer T."/>
            <person name="Bennett K.L."/>
            <person name="Superti-Furga G."/>
            <person name="Colinge J."/>
        </authorList>
    </citation>
    <scope>IDENTIFICATION BY MASS SPECTROMETRY [LARGE SCALE ANALYSIS]</scope>
</reference>
<reference key="10">
    <citation type="journal article" date="2012" name="Proc. Natl. Acad. Sci. U.S.A.">
        <title>N-terminal acetylome analyses and functional insights of the N-terminal acetyltransferase NatB.</title>
        <authorList>
            <person name="Van Damme P."/>
            <person name="Lasa M."/>
            <person name="Polevoda B."/>
            <person name="Gazquez C."/>
            <person name="Elosegui-Artola A."/>
            <person name="Kim D.S."/>
            <person name="De Juan-Pardo E."/>
            <person name="Demeyer K."/>
            <person name="Hole K."/>
            <person name="Larrea E."/>
            <person name="Timmerman E."/>
            <person name="Prieto J."/>
            <person name="Arnesen T."/>
            <person name="Sherman F."/>
            <person name="Gevaert K."/>
            <person name="Aldabe R."/>
        </authorList>
    </citation>
    <scope>ACETYLATION [LARGE SCALE ANALYSIS] AT ALA-2</scope>
    <scope>CLEAVAGE OF INITIATOR METHIONINE [LARGE SCALE ANALYSIS]</scope>
    <scope>IDENTIFICATION BY MASS SPECTROMETRY [LARGE SCALE ANALYSIS]</scope>
</reference>
<reference key="11">
    <citation type="journal article" date="2014" name="Curr. Opin. Struct. Biol.">
        <title>A new system for naming ribosomal proteins.</title>
        <authorList>
            <person name="Ban N."/>
            <person name="Beckmann R."/>
            <person name="Cate J.H.D."/>
            <person name="Dinman J.D."/>
            <person name="Dragon F."/>
            <person name="Ellis S.R."/>
            <person name="Lafontaine D.L.J."/>
            <person name="Lindahl L."/>
            <person name="Liljas A."/>
            <person name="Lipton J.M."/>
            <person name="McAlear M.A."/>
            <person name="Moore P.B."/>
            <person name="Noller H.F."/>
            <person name="Ortega J."/>
            <person name="Panse V.G."/>
            <person name="Ramakrishnan V."/>
            <person name="Spahn C.M.T."/>
            <person name="Steitz T.A."/>
            <person name="Tchorzewski M."/>
            <person name="Tollervey D."/>
            <person name="Warren A.J."/>
            <person name="Williamson J.R."/>
            <person name="Wilson D."/>
            <person name="Yonath A."/>
            <person name="Yusupov M."/>
        </authorList>
    </citation>
    <scope>NOMENCLATURE</scope>
</reference>
<reference key="12">
    <citation type="journal article" date="2014" name="J. Proteomics">
        <title>An enzyme assisted RP-RPLC approach for in-depth analysis of human liver phosphoproteome.</title>
        <authorList>
            <person name="Bian Y."/>
            <person name="Song C."/>
            <person name="Cheng K."/>
            <person name="Dong M."/>
            <person name="Wang F."/>
            <person name="Huang J."/>
            <person name="Sun D."/>
            <person name="Wang L."/>
            <person name="Ye M."/>
            <person name="Zou H."/>
        </authorList>
    </citation>
    <scope>IDENTIFICATION BY MASS SPECTROMETRY [LARGE SCALE ANALYSIS]</scope>
    <source>
        <tissue>Liver</tissue>
    </source>
</reference>
<reference key="13">
    <citation type="journal article" date="2015" name="Proteomics">
        <title>N-terminome analysis of the human mitochondrial proteome.</title>
        <authorList>
            <person name="Vaca Jacome A.S."/>
            <person name="Rabilloud T."/>
            <person name="Schaeffer-Reiss C."/>
            <person name="Rompais M."/>
            <person name="Ayoub D."/>
            <person name="Lane L."/>
            <person name="Bairoch A."/>
            <person name="Van Dorsselaer A."/>
            <person name="Carapito C."/>
        </authorList>
    </citation>
    <scope>IDENTIFICATION BY MASS SPECTROMETRY [LARGE SCALE ANALYSIS]</scope>
</reference>
<reference key="14">
    <citation type="journal article" date="2017" name="Nat. Struct. Mol. Biol.">
        <title>Site-specific mapping of the human SUMO proteome reveals co-modification with phosphorylation.</title>
        <authorList>
            <person name="Hendriks I.A."/>
            <person name="Lyon D."/>
            <person name="Young C."/>
            <person name="Jensen L.J."/>
            <person name="Vertegaal A.C."/>
            <person name="Nielsen M.L."/>
        </authorList>
    </citation>
    <scope>SUMOYLATION [LARGE SCALE ANALYSIS] AT LYS-108</scope>
    <scope>IDENTIFICATION BY MASS SPECTROMETRY [LARGE SCALE ANALYSIS]</scope>
</reference>
<reference key="15">
    <citation type="journal article" date="2013" name="Nature">
        <title>Structures of the human and Drosophila 80S ribosome.</title>
        <authorList>
            <person name="Anger A.M."/>
            <person name="Armache J.P."/>
            <person name="Berninghausen O."/>
            <person name="Habeck M."/>
            <person name="Subklewe M."/>
            <person name="Wilson D.N."/>
            <person name="Beckmann R."/>
        </authorList>
    </citation>
    <scope>STRUCTURE BY ELECTRON MICROSCOPY (5.0 ANGSTROMS) OF RIBOSOME</scope>
    <scope>FUNCTION</scope>
    <scope>SUBUNIT</scope>
    <scope>SUBCELLULAR LOCATION</scope>
</reference>
<keyword id="KW-0002">3D-structure</keyword>
<keyword id="KW-0007">Acetylation</keyword>
<keyword id="KW-0963">Cytoplasm</keyword>
<keyword id="KW-0903">Direct protein sequencing</keyword>
<keyword id="KW-1017">Isopeptide bond</keyword>
<keyword id="KW-1267">Proteomics identification</keyword>
<keyword id="KW-1185">Reference proteome</keyword>
<keyword id="KW-0687">Ribonucleoprotein</keyword>
<keyword id="KW-0689">Ribosomal protein</keyword>
<keyword id="KW-0832">Ubl conjugation</keyword>
<accession>P62841</accession>
<accession>A5D8V9</accession>
<accession>P11174</accession>
<accession>Q3KRA1</accession>
<accession>Q9UDC2</accession>
<proteinExistence type="evidence at protein level"/>
<comment type="function">
    <text evidence="1">Component of the small ribosomal subunit (PubMed:23636399). The ribosome is a large ribonucleoprotein complex responsible for the synthesis of proteins in the cell (PubMed:23636399).</text>
</comment>
<comment type="subunit">
    <text evidence="1">Component of the small ribosomal subunit.</text>
</comment>
<comment type="interaction">
    <interactant intactId="EBI-372635">
        <id>P62841</id>
    </interactant>
    <interactant intactId="EBI-751757">
        <id>Q7L622</id>
        <label>G2E3</label>
    </interactant>
    <organismsDiffer>false</organismsDiffer>
    <experiments>3</experiments>
</comment>
<comment type="interaction">
    <interactant intactId="EBI-372635">
        <id>P62841</id>
    </interactant>
    <interactant intactId="EBI-5323863">
        <id>Q5S007</id>
        <label>LRRK2</label>
    </interactant>
    <organismsDiffer>false</organismsDiffer>
    <experiments>9</experiments>
</comment>
<comment type="interaction">
    <interactant intactId="EBI-372635">
        <id>P62841</id>
    </interactant>
    <interactant intactId="EBI-437708">
        <id>P62937</id>
        <label>PPIA</label>
    </interactant>
    <organismsDiffer>false</organismsDiffer>
    <experiments>3</experiments>
</comment>
<comment type="subcellular location">
    <subcellularLocation>
        <location evidence="1">Cytoplasm</location>
    </subcellularLocation>
</comment>
<comment type="similarity">
    <text evidence="3">Belongs to the universal ribosomal protein uS19 family.</text>
</comment>
<organism>
    <name type="scientific">Homo sapiens</name>
    <name type="common">Human</name>
    <dbReference type="NCBI Taxonomy" id="9606"/>
    <lineage>
        <taxon>Eukaryota</taxon>
        <taxon>Metazoa</taxon>
        <taxon>Chordata</taxon>
        <taxon>Craniata</taxon>
        <taxon>Vertebrata</taxon>
        <taxon>Euteleostomi</taxon>
        <taxon>Mammalia</taxon>
        <taxon>Eutheria</taxon>
        <taxon>Euarchontoglires</taxon>
        <taxon>Primates</taxon>
        <taxon>Haplorrhini</taxon>
        <taxon>Catarrhini</taxon>
        <taxon>Hominidae</taxon>
        <taxon>Homo</taxon>
    </lineage>
</organism>
<protein>
    <recommendedName>
        <fullName evidence="2">Small ribosomal subunit protein uS19</fullName>
    </recommendedName>
    <alternativeName>
        <fullName>40S ribosomal protein S15</fullName>
    </alternativeName>
    <alternativeName>
        <fullName>RIG protein</fullName>
    </alternativeName>
</protein>
<name>RS15_HUMAN</name>